<proteinExistence type="evidence at protein level"/>
<reference key="1">
    <citation type="journal article" date="2002" name="Nature">
        <title>The genome sequence of Schizosaccharomyces pombe.</title>
        <authorList>
            <person name="Wood V."/>
            <person name="Gwilliam R."/>
            <person name="Rajandream M.A."/>
            <person name="Lyne M.H."/>
            <person name="Lyne R."/>
            <person name="Stewart A."/>
            <person name="Sgouros J.G."/>
            <person name="Peat N."/>
            <person name="Hayles J."/>
            <person name="Baker S.G."/>
            <person name="Basham D."/>
            <person name="Bowman S."/>
            <person name="Brooks K."/>
            <person name="Brown D."/>
            <person name="Brown S."/>
            <person name="Chillingworth T."/>
            <person name="Churcher C.M."/>
            <person name="Collins M."/>
            <person name="Connor R."/>
            <person name="Cronin A."/>
            <person name="Davis P."/>
            <person name="Feltwell T."/>
            <person name="Fraser A."/>
            <person name="Gentles S."/>
            <person name="Goble A."/>
            <person name="Hamlin N."/>
            <person name="Harris D.E."/>
            <person name="Hidalgo J."/>
            <person name="Hodgson G."/>
            <person name="Holroyd S."/>
            <person name="Hornsby T."/>
            <person name="Howarth S."/>
            <person name="Huckle E.J."/>
            <person name="Hunt S."/>
            <person name="Jagels K."/>
            <person name="James K.D."/>
            <person name="Jones L."/>
            <person name="Jones M."/>
            <person name="Leather S."/>
            <person name="McDonald S."/>
            <person name="McLean J."/>
            <person name="Mooney P."/>
            <person name="Moule S."/>
            <person name="Mungall K.L."/>
            <person name="Murphy L.D."/>
            <person name="Niblett D."/>
            <person name="Odell C."/>
            <person name="Oliver K."/>
            <person name="O'Neil S."/>
            <person name="Pearson D."/>
            <person name="Quail M.A."/>
            <person name="Rabbinowitsch E."/>
            <person name="Rutherford K.M."/>
            <person name="Rutter S."/>
            <person name="Saunders D."/>
            <person name="Seeger K."/>
            <person name="Sharp S."/>
            <person name="Skelton J."/>
            <person name="Simmonds M.N."/>
            <person name="Squares R."/>
            <person name="Squares S."/>
            <person name="Stevens K."/>
            <person name="Taylor K."/>
            <person name="Taylor R.G."/>
            <person name="Tivey A."/>
            <person name="Walsh S.V."/>
            <person name="Warren T."/>
            <person name="Whitehead S."/>
            <person name="Woodward J.R."/>
            <person name="Volckaert G."/>
            <person name="Aert R."/>
            <person name="Robben J."/>
            <person name="Grymonprez B."/>
            <person name="Weltjens I."/>
            <person name="Vanstreels E."/>
            <person name="Rieger M."/>
            <person name="Schaefer M."/>
            <person name="Mueller-Auer S."/>
            <person name="Gabel C."/>
            <person name="Fuchs M."/>
            <person name="Duesterhoeft A."/>
            <person name="Fritzc C."/>
            <person name="Holzer E."/>
            <person name="Moestl D."/>
            <person name="Hilbert H."/>
            <person name="Borzym K."/>
            <person name="Langer I."/>
            <person name="Beck A."/>
            <person name="Lehrach H."/>
            <person name="Reinhardt R."/>
            <person name="Pohl T.M."/>
            <person name="Eger P."/>
            <person name="Zimmermann W."/>
            <person name="Wedler H."/>
            <person name="Wambutt R."/>
            <person name="Purnelle B."/>
            <person name="Goffeau A."/>
            <person name="Cadieu E."/>
            <person name="Dreano S."/>
            <person name="Gloux S."/>
            <person name="Lelaure V."/>
            <person name="Mottier S."/>
            <person name="Galibert F."/>
            <person name="Aves S.J."/>
            <person name="Xiang Z."/>
            <person name="Hunt C."/>
            <person name="Moore K."/>
            <person name="Hurst S.M."/>
            <person name="Lucas M."/>
            <person name="Rochet M."/>
            <person name="Gaillardin C."/>
            <person name="Tallada V.A."/>
            <person name="Garzon A."/>
            <person name="Thode G."/>
            <person name="Daga R.R."/>
            <person name="Cruzado L."/>
            <person name="Jimenez J."/>
            <person name="Sanchez M."/>
            <person name="del Rey F."/>
            <person name="Benito J."/>
            <person name="Dominguez A."/>
            <person name="Revuelta J.L."/>
            <person name="Moreno S."/>
            <person name="Armstrong J."/>
            <person name="Forsburg S.L."/>
            <person name="Cerutti L."/>
            <person name="Lowe T."/>
            <person name="McCombie W.R."/>
            <person name="Paulsen I."/>
            <person name="Potashkin J."/>
            <person name="Shpakovski G.V."/>
            <person name="Ussery D."/>
            <person name="Barrell B.G."/>
            <person name="Nurse P."/>
        </authorList>
    </citation>
    <scope>NUCLEOTIDE SEQUENCE [LARGE SCALE GENOMIC DNA]</scope>
    <source>
        <strain>972 / ATCC 24843</strain>
    </source>
</reference>
<reference key="2">
    <citation type="journal article" date="2006" name="Nat. Biotechnol.">
        <title>ORFeome cloning and global analysis of protein localization in the fission yeast Schizosaccharomyces pombe.</title>
        <authorList>
            <person name="Matsuyama A."/>
            <person name="Arai R."/>
            <person name="Yashiroda Y."/>
            <person name="Shirai A."/>
            <person name="Kamata A."/>
            <person name="Sekido S."/>
            <person name="Kobayashi Y."/>
            <person name="Hashimoto A."/>
            <person name="Hamamoto M."/>
            <person name="Hiraoka Y."/>
            <person name="Horinouchi S."/>
            <person name="Yoshida M."/>
        </authorList>
    </citation>
    <scope>SUBCELLULAR LOCATION [LARGE SCALE ANALYSIS]</scope>
</reference>
<reference key="3">
    <citation type="journal article" date="2008" name="J. Proteome Res.">
        <title>Phosphoproteome analysis of fission yeast.</title>
        <authorList>
            <person name="Wilson-Grady J.T."/>
            <person name="Villen J."/>
            <person name="Gygi S.P."/>
        </authorList>
    </citation>
    <scope>PHOSPHORYLATION [LARGE SCALE ANALYSIS] AT SER-11</scope>
    <scope>IDENTIFICATION BY MASS SPECTROMETRY</scope>
</reference>
<protein>
    <recommendedName>
        <fullName evidence="4">Large ribosomal subunit protein uL1B</fullName>
    </recommendedName>
    <alternativeName>
        <fullName>60S ribosomal protein L1-B</fullName>
    </alternativeName>
    <alternativeName>
        <fullName>L10a</fullName>
    </alternativeName>
</protein>
<gene>
    <name type="primary">rpl101</name>
    <name type="synonym">rpl10a-1</name>
    <name type="synonym">rpl1b</name>
    <name type="ORF">SPCC1183.08c</name>
</gene>
<name>RL1B_SCHPO</name>
<dbReference type="EMBL" id="CU329672">
    <property type="protein sequence ID" value="CAA21088.1"/>
    <property type="molecule type" value="Genomic_DNA"/>
</dbReference>
<dbReference type="PIR" id="T40848">
    <property type="entry name" value="T40848"/>
</dbReference>
<dbReference type="RefSeq" id="NP_587891.1">
    <property type="nucleotide sequence ID" value="NM_001022883.2"/>
</dbReference>
<dbReference type="SMR" id="O74836"/>
<dbReference type="BioGRID" id="275792">
    <property type="interactions" value="7"/>
</dbReference>
<dbReference type="FunCoup" id="O74836">
    <property type="interactions" value="437"/>
</dbReference>
<dbReference type="STRING" id="284812.O74836"/>
<dbReference type="iPTMnet" id="O74836"/>
<dbReference type="PaxDb" id="4896-SPCC1183.08c.1"/>
<dbReference type="EnsemblFungi" id="SPCC1183.08c.1">
    <property type="protein sequence ID" value="SPCC1183.08c.1:pep"/>
    <property type="gene ID" value="SPCC1183.08c"/>
</dbReference>
<dbReference type="GeneID" id="2539222"/>
<dbReference type="KEGG" id="spo:2539222"/>
<dbReference type="PomBase" id="SPCC1183.08c">
    <property type="gene designation" value="rpl101"/>
</dbReference>
<dbReference type="VEuPathDB" id="FungiDB:SPCC1183.08c"/>
<dbReference type="eggNOG" id="KOG1570">
    <property type="taxonomic scope" value="Eukaryota"/>
</dbReference>
<dbReference type="HOGENOM" id="CLU_062853_3_0_1"/>
<dbReference type="InParanoid" id="O74836"/>
<dbReference type="OMA" id="CVGHVNM"/>
<dbReference type="PhylomeDB" id="O74836"/>
<dbReference type="Reactome" id="R-SPO-156827">
    <property type="pathway name" value="L13a-mediated translational silencing of Ceruloplasmin expression"/>
</dbReference>
<dbReference type="Reactome" id="R-SPO-1799339">
    <property type="pathway name" value="SRP-dependent cotranslational protein targeting to membrane"/>
</dbReference>
<dbReference type="Reactome" id="R-SPO-72689">
    <property type="pathway name" value="Formation of a pool of free 40S subunits"/>
</dbReference>
<dbReference type="Reactome" id="R-SPO-72706">
    <property type="pathway name" value="GTP hydrolysis and joining of the 60S ribosomal subunit"/>
</dbReference>
<dbReference type="Reactome" id="R-SPO-975956">
    <property type="pathway name" value="Nonsense Mediated Decay (NMD) independent of the Exon Junction Complex (EJC)"/>
</dbReference>
<dbReference type="Reactome" id="R-SPO-975957">
    <property type="pathway name" value="Nonsense Mediated Decay (NMD) enhanced by the Exon Junction Complex (EJC)"/>
</dbReference>
<dbReference type="PRO" id="PR:O74836"/>
<dbReference type="Proteomes" id="UP000002485">
    <property type="component" value="Chromosome III"/>
</dbReference>
<dbReference type="GO" id="GO:0005829">
    <property type="term" value="C:cytosol"/>
    <property type="evidence" value="ECO:0007005"/>
    <property type="project" value="PomBase"/>
</dbReference>
<dbReference type="GO" id="GO:0022625">
    <property type="term" value="C:cytosolic large ribosomal subunit"/>
    <property type="evidence" value="ECO:0000318"/>
    <property type="project" value="GO_Central"/>
</dbReference>
<dbReference type="GO" id="GO:0003723">
    <property type="term" value="F:RNA binding"/>
    <property type="evidence" value="ECO:0000318"/>
    <property type="project" value="GO_Central"/>
</dbReference>
<dbReference type="GO" id="GO:0003735">
    <property type="term" value="F:structural constituent of ribosome"/>
    <property type="evidence" value="ECO:0000266"/>
    <property type="project" value="PomBase"/>
</dbReference>
<dbReference type="GO" id="GO:0002181">
    <property type="term" value="P:cytoplasmic translation"/>
    <property type="evidence" value="ECO:0000266"/>
    <property type="project" value="PomBase"/>
</dbReference>
<dbReference type="CDD" id="cd00403">
    <property type="entry name" value="Ribosomal_L1"/>
    <property type="match status" value="1"/>
</dbReference>
<dbReference type="FunFam" id="3.30.190.20:FF:000006">
    <property type="entry name" value="Ribosomal protein"/>
    <property type="match status" value="1"/>
</dbReference>
<dbReference type="FunFam" id="3.40.50.790:FF:000002">
    <property type="entry name" value="Ribosomal protein"/>
    <property type="match status" value="1"/>
</dbReference>
<dbReference type="FunFam" id="3.30.190.20:FF:000009">
    <property type="entry name" value="Ribosomal protein L10a"/>
    <property type="match status" value="1"/>
</dbReference>
<dbReference type="Gene3D" id="3.30.190.20">
    <property type="match status" value="1"/>
</dbReference>
<dbReference type="Gene3D" id="3.40.50.790">
    <property type="match status" value="1"/>
</dbReference>
<dbReference type="InterPro" id="IPR050257">
    <property type="entry name" value="eL8/uL1-like"/>
</dbReference>
<dbReference type="InterPro" id="IPR002143">
    <property type="entry name" value="Ribosomal_uL1"/>
</dbReference>
<dbReference type="InterPro" id="IPR023674">
    <property type="entry name" value="Ribosomal_uL1-like"/>
</dbReference>
<dbReference type="InterPro" id="IPR028364">
    <property type="entry name" value="Ribosomal_uL1/biogenesis"/>
</dbReference>
<dbReference type="InterPro" id="IPR016095">
    <property type="entry name" value="Ribosomal_uL1_3-a/b-sand"/>
</dbReference>
<dbReference type="InterPro" id="IPR023673">
    <property type="entry name" value="Ribosomal_uL1_CS"/>
</dbReference>
<dbReference type="PANTHER" id="PTHR23105">
    <property type="entry name" value="RIBOSOMAL PROTEIN L7AE FAMILY MEMBER"/>
    <property type="match status" value="1"/>
</dbReference>
<dbReference type="Pfam" id="PF00687">
    <property type="entry name" value="Ribosomal_L1"/>
    <property type="match status" value="1"/>
</dbReference>
<dbReference type="PIRSF" id="PIRSF002155">
    <property type="entry name" value="Ribosomal_L1"/>
    <property type="match status" value="1"/>
</dbReference>
<dbReference type="SUPFAM" id="SSF56808">
    <property type="entry name" value="Ribosomal protein L1"/>
    <property type="match status" value="1"/>
</dbReference>
<dbReference type="PROSITE" id="PS01199">
    <property type="entry name" value="RIBOSOMAL_L1"/>
    <property type="match status" value="1"/>
</dbReference>
<sequence length="216" mass="23917">MSKVSVASVRSNVEQILKGSEEKKRNFTETVELQIGLKNYDPQRDKRFSGTIKLPNVPRPNMAICILGDAHDLDRAKHGGVDAMSVDDLKKLNKNKKLVKKLAKKYDAFIASEVLIKQIPRLLGPGLSKAGKFPSPVSHADDLYGKITEVKSTIKFQLKKVLCLGVAVGHVEMSEEQLIANIMLAVNFLVSLLKKGWQNIGSLVVKSTMGKPHRLY</sequence>
<accession>O74836</accession>
<evidence type="ECO:0000250" key="1">
    <source>
        <dbReference type="UniProtKB" id="P0CX44"/>
    </source>
</evidence>
<evidence type="ECO:0000269" key="2">
    <source>
    </source>
</evidence>
<evidence type="ECO:0000269" key="3">
    <source>
    </source>
</evidence>
<evidence type="ECO:0000305" key="4"/>
<comment type="function">
    <text evidence="1">Component of the ribosome, a large ribonucleoprotein complex responsible for the synthesis of proteins in the cell. The small ribosomal subunit (SSU) binds messenger RNAs (mRNAs) and translates the encoded message by selecting cognate aminoacyl-transfer RNA (tRNA) molecules. The large subunit (LSU) contains the ribosomal catalytic site termed the peptidyl transferase center (PTC), which catalyzes the formation of peptide bonds, thereby polymerizing the amino acids delivered by tRNAs into a polypeptide chain. The nascent polypeptides leave the ribosome through a tunnel in the LSU and interact with protein factors that function in enzymatic processing, targeting, and the membrane insertion of nascent chains at the exit of the ribosomal tunnel. uL1 forms part of the L1 stalk, a mobile element that plays a role in evacuating the exit-site tRNA.</text>
</comment>
<comment type="subunit">
    <text evidence="1">Component of the large ribosomal subunit (LSU). Mature yeast ribosomes consist of a small (40S) and a large (60S) subunit. The 40S small subunit contains 1 molecule of ribosomal RNA (18S rRNA) and at least 33 different proteins. The large 60S subunit contains 3 rRNA molecules (25S, 5.8S and 5S rRNA) and at least 46 different proteins. uL1 forms part of the L1 stalk.</text>
</comment>
<comment type="subcellular location">
    <subcellularLocation>
        <location evidence="2">Cytoplasm</location>
    </subcellularLocation>
</comment>
<comment type="miscellaneous">
    <text>There are 2 genes for uL1 in S.pombe.</text>
</comment>
<comment type="similarity">
    <text evidence="4">Belongs to the universal ribosomal protein uL1 family.</text>
</comment>
<organism>
    <name type="scientific">Schizosaccharomyces pombe (strain 972 / ATCC 24843)</name>
    <name type="common">Fission yeast</name>
    <dbReference type="NCBI Taxonomy" id="284812"/>
    <lineage>
        <taxon>Eukaryota</taxon>
        <taxon>Fungi</taxon>
        <taxon>Dikarya</taxon>
        <taxon>Ascomycota</taxon>
        <taxon>Taphrinomycotina</taxon>
        <taxon>Schizosaccharomycetes</taxon>
        <taxon>Schizosaccharomycetales</taxon>
        <taxon>Schizosaccharomycetaceae</taxon>
        <taxon>Schizosaccharomyces</taxon>
    </lineage>
</organism>
<keyword id="KW-0963">Cytoplasm</keyword>
<keyword id="KW-0597">Phosphoprotein</keyword>
<keyword id="KW-1185">Reference proteome</keyword>
<keyword id="KW-0687">Ribonucleoprotein</keyword>
<keyword id="KW-0689">Ribosomal protein</keyword>
<feature type="chain" id="PRO_0000125841" description="Large ribosomal subunit protein uL1B">
    <location>
        <begin position="1"/>
        <end position="216"/>
    </location>
</feature>
<feature type="modified residue" description="Phosphoserine" evidence="3">
    <location>
        <position position="11"/>
    </location>
</feature>